<dbReference type="EC" id="2.7.1.33" evidence="1"/>
<dbReference type="EMBL" id="CP001389">
    <property type="protein sequence ID" value="ACP27128.1"/>
    <property type="molecule type" value="Genomic_DNA"/>
</dbReference>
<dbReference type="RefSeq" id="WP_012709875.1">
    <property type="nucleotide sequence ID" value="NC_012587.1"/>
</dbReference>
<dbReference type="RefSeq" id="YP_002827881.1">
    <property type="nucleotide sequence ID" value="NC_012587.1"/>
</dbReference>
<dbReference type="SMR" id="C3MBB9"/>
<dbReference type="STRING" id="394.NGR_c33980"/>
<dbReference type="KEGG" id="rhi:NGR_c33980"/>
<dbReference type="PATRIC" id="fig|394.7.peg.6247"/>
<dbReference type="eggNOG" id="COG1072">
    <property type="taxonomic scope" value="Bacteria"/>
</dbReference>
<dbReference type="HOGENOM" id="CLU_053818_1_1_5"/>
<dbReference type="OrthoDB" id="1550976at2"/>
<dbReference type="UniPathway" id="UPA00241">
    <property type="reaction ID" value="UER00352"/>
</dbReference>
<dbReference type="Proteomes" id="UP000001054">
    <property type="component" value="Chromosome"/>
</dbReference>
<dbReference type="GO" id="GO:0005737">
    <property type="term" value="C:cytoplasm"/>
    <property type="evidence" value="ECO:0007669"/>
    <property type="project" value="UniProtKB-SubCell"/>
</dbReference>
<dbReference type="GO" id="GO:0005524">
    <property type="term" value="F:ATP binding"/>
    <property type="evidence" value="ECO:0007669"/>
    <property type="project" value="UniProtKB-UniRule"/>
</dbReference>
<dbReference type="GO" id="GO:0004594">
    <property type="term" value="F:pantothenate kinase activity"/>
    <property type="evidence" value="ECO:0007669"/>
    <property type="project" value="UniProtKB-UniRule"/>
</dbReference>
<dbReference type="GO" id="GO:0015937">
    <property type="term" value="P:coenzyme A biosynthetic process"/>
    <property type="evidence" value="ECO:0007669"/>
    <property type="project" value="UniProtKB-UniRule"/>
</dbReference>
<dbReference type="CDD" id="cd02025">
    <property type="entry name" value="PanK"/>
    <property type="match status" value="1"/>
</dbReference>
<dbReference type="Gene3D" id="3.40.50.300">
    <property type="entry name" value="P-loop containing nucleotide triphosphate hydrolases"/>
    <property type="match status" value="1"/>
</dbReference>
<dbReference type="HAMAP" id="MF_00215">
    <property type="entry name" value="Pantothen_kinase_1"/>
    <property type="match status" value="1"/>
</dbReference>
<dbReference type="InterPro" id="IPR027417">
    <property type="entry name" value="P-loop_NTPase"/>
</dbReference>
<dbReference type="InterPro" id="IPR004566">
    <property type="entry name" value="PanK"/>
</dbReference>
<dbReference type="InterPro" id="IPR006083">
    <property type="entry name" value="PRK/URK"/>
</dbReference>
<dbReference type="NCBIfam" id="TIGR00554">
    <property type="entry name" value="panK_bact"/>
    <property type="match status" value="1"/>
</dbReference>
<dbReference type="PANTHER" id="PTHR10285">
    <property type="entry name" value="URIDINE KINASE"/>
    <property type="match status" value="1"/>
</dbReference>
<dbReference type="Pfam" id="PF00485">
    <property type="entry name" value="PRK"/>
    <property type="match status" value="1"/>
</dbReference>
<dbReference type="PIRSF" id="PIRSF000545">
    <property type="entry name" value="Pantothenate_kin"/>
    <property type="match status" value="1"/>
</dbReference>
<dbReference type="SUPFAM" id="SSF52540">
    <property type="entry name" value="P-loop containing nucleoside triphosphate hydrolases"/>
    <property type="match status" value="1"/>
</dbReference>
<protein>
    <recommendedName>
        <fullName evidence="1">Pantothenate kinase</fullName>
        <ecNumber evidence="1">2.7.1.33</ecNumber>
    </recommendedName>
    <alternativeName>
        <fullName evidence="1">Pantothenic acid kinase</fullName>
    </alternativeName>
</protein>
<sequence length="331" mass="37459">MSIAAKDIEPGDIPGNLTGGEFSPYHVFSAEEWSRFRADTPLTLTGEEVKRLRSLNDPVDLGEVRRIYLSLSRLLSAHVEASQILFQQRKRFLSMSDETKTPFVIGIAGSVAVGKSTTARILAELLARWPSSPKVDLITTDGFLYPNAILQRDNMMDRKGFPESYDIGALLRFLSAIKAGRPNVKAPTYSHLTYDVIPDQFQLIDRPDILIFEGINVLQSRDLPADGKIVPMVSDFFDFSIYIDAEESLIHNWYVSRFMRLRETAFQNPQSFFHRYSTISEDAARAIAEGLWHNINLKNLHQNIQPTRPRADLILQKGPSHLTQTVALRKL</sequence>
<reference key="1">
    <citation type="journal article" date="2009" name="Appl. Environ. Microbiol.">
        <title>Rhizobium sp. strain NGR234 possesses a remarkable number of secretion systems.</title>
        <authorList>
            <person name="Schmeisser C."/>
            <person name="Liesegang H."/>
            <person name="Krysciak D."/>
            <person name="Bakkou N."/>
            <person name="Le Quere A."/>
            <person name="Wollherr A."/>
            <person name="Heinemeyer I."/>
            <person name="Morgenstern B."/>
            <person name="Pommerening-Roeser A."/>
            <person name="Flores M."/>
            <person name="Palacios R."/>
            <person name="Brenner S."/>
            <person name="Gottschalk G."/>
            <person name="Schmitz R.A."/>
            <person name="Broughton W.J."/>
            <person name="Perret X."/>
            <person name="Strittmatter A.W."/>
            <person name="Streit W.R."/>
        </authorList>
    </citation>
    <scope>NUCLEOTIDE SEQUENCE [LARGE SCALE GENOMIC DNA]</scope>
    <source>
        <strain>NBRC 101917 / NGR234</strain>
    </source>
</reference>
<gene>
    <name evidence="1" type="primary">coaA</name>
    <name type="ordered locus">NGR_c33980</name>
</gene>
<comment type="catalytic activity">
    <reaction evidence="1">
        <text>(R)-pantothenate + ATP = (R)-4'-phosphopantothenate + ADP + H(+)</text>
        <dbReference type="Rhea" id="RHEA:16373"/>
        <dbReference type="ChEBI" id="CHEBI:10986"/>
        <dbReference type="ChEBI" id="CHEBI:15378"/>
        <dbReference type="ChEBI" id="CHEBI:29032"/>
        <dbReference type="ChEBI" id="CHEBI:30616"/>
        <dbReference type="ChEBI" id="CHEBI:456216"/>
        <dbReference type="EC" id="2.7.1.33"/>
    </reaction>
</comment>
<comment type="pathway">
    <text evidence="1">Cofactor biosynthesis; coenzyme A biosynthesis; CoA from (R)-pantothenate: step 1/5.</text>
</comment>
<comment type="subcellular location">
    <subcellularLocation>
        <location evidence="1">Cytoplasm</location>
    </subcellularLocation>
</comment>
<comment type="similarity">
    <text evidence="1">Belongs to the prokaryotic pantothenate kinase family.</text>
</comment>
<organism>
    <name type="scientific">Sinorhizobium fredii (strain NBRC 101917 / NGR234)</name>
    <dbReference type="NCBI Taxonomy" id="394"/>
    <lineage>
        <taxon>Bacteria</taxon>
        <taxon>Pseudomonadati</taxon>
        <taxon>Pseudomonadota</taxon>
        <taxon>Alphaproteobacteria</taxon>
        <taxon>Hyphomicrobiales</taxon>
        <taxon>Rhizobiaceae</taxon>
        <taxon>Sinorhizobium/Ensifer group</taxon>
        <taxon>Sinorhizobium</taxon>
    </lineage>
</organism>
<name>COAA_SINFN</name>
<feature type="chain" id="PRO_1000124803" description="Pantothenate kinase">
    <location>
        <begin position="1"/>
        <end position="331"/>
    </location>
</feature>
<feature type="binding site" evidence="1">
    <location>
        <begin position="109"/>
        <end position="116"/>
    </location>
    <ligand>
        <name>ATP</name>
        <dbReference type="ChEBI" id="CHEBI:30616"/>
    </ligand>
</feature>
<accession>C3MBB9</accession>
<evidence type="ECO:0000255" key="1">
    <source>
        <dbReference type="HAMAP-Rule" id="MF_00215"/>
    </source>
</evidence>
<keyword id="KW-0067">ATP-binding</keyword>
<keyword id="KW-0173">Coenzyme A biosynthesis</keyword>
<keyword id="KW-0963">Cytoplasm</keyword>
<keyword id="KW-0418">Kinase</keyword>
<keyword id="KW-0547">Nucleotide-binding</keyword>
<keyword id="KW-1185">Reference proteome</keyword>
<keyword id="KW-0808">Transferase</keyword>
<proteinExistence type="inferred from homology"/>